<name>KIN17_HUMAN</name>
<proteinExistence type="evidence at protein level"/>
<accession>O60870</accession>
<accession>B4DX32</accession>
<sequence length="393" mass="45374">MGKSDFLTPKAIANRIKSKGLQKLRWYCQMCQKQCRDENGFKCHCMSESHQRQLLLASENPQQFMDYFSEEFRNDFLELLRRRFGTKRVHNNIVYNEYISHREHIHMNATQWETLTDFTKWLGREGLCKVDETPKGWYIQYIDRDPETIRRQLELEKKKKQDLDDEEKTAKFIEEQVRRGLEGKEQEVPTFTELSRENDEEKVTFNLSKGACSSSGATSSKSSTLGPSALKTIGSSASVKRKESSQSSTQSKEKKKKKSALDEIMEIEEEKKRTARTDYWLQPEIIVKIITKKLGEKYHKKKAIVKEVIDKYTAVVKMIDSGDKLKLDQTHLETVIPAPGKRILVLNGGYRGNEGTLESINEKTFSATIVIETGPLKGRRVEGIQYEDISKLA</sequence>
<reference evidence="15 18" key="1">
    <citation type="journal article" date="2000" name="Carcinogenesis">
        <title>Molecular cloning and characterization of the human KIN17 cDNA encoding a component of the UVC response that is conserved among metazoans.</title>
        <authorList>
            <person name="Kannouche P."/>
            <person name="Mauffrey P."/>
            <person name="Pinon-Lataillade G."/>
            <person name="Mattei M.-G."/>
            <person name="Sarasin A."/>
            <person name="Daya-Grosjean L."/>
            <person name="Angulo J.F."/>
        </authorList>
    </citation>
    <scope>NUCLEOTIDE SEQUENCE [MRNA] (ISOFORM 1)</scope>
    <scope>TISSUE SPECIFICITY</scope>
    <scope>INDUCTION BY UVC</scope>
    <source>
        <tissue evidence="18">Testis</tissue>
    </source>
</reference>
<reference key="2">
    <citation type="journal article" date="2004" name="Nat. Genet.">
        <title>Complete sequencing and characterization of 21,243 full-length human cDNAs.</title>
        <authorList>
            <person name="Ota T."/>
            <person name="Suzuki Y."/>
            <person name="Nishikawa T."/>
            <person name="Otsuki T."/>
            <person name="Sugiyama T."/>
            <person name="Irie R."/>
            <person name="Wakamatsu A."/>
            <person name="Hayashi K."/>
            <person name="Sato H."/>
            <person name="Nagai K."/>
            <person name="Kimura K."/>
            <person name="Makita H."/>
            <person name="Sekine M."/>
            <person name="Obayashi M."/>
            <person name="Nishi T."/>
            <person name="Shibahara T."/>
            <person name="Tanaka T."/>
            <person name="Ishii S."/>
            <person name="Yamamoto J."/>
            <person name="Saito K."/>
            <person name="Kawai Y."/>
            <person name="Isono Y."/>
            <person name="Nakamura Y."/>
            <person name="Nagahari K."/>
            <person name="Murakami K."/>
            <person name="Yasuda T."/>
            <person name="Iwayanagi T."/>
            <person name="Wagatsuma M."/>
            <person name="Shiratori A."/>
            <person name="Sudo H."/>
            <person name="Hosoiri T."/>
            <person name="Kaku Y."/>
            <person name="Kodaira H."/>
            <person name="Kondo H."/>
            <person name="Sugawara M."/>
            <person name="Takahashi M."/>
            <person name="Kanda K."/>
            <person name="Yokoi T."/>
            <person name="Furuya T."/>
            <person name="Kikkawa E."/>
            <person name="Omura Y."/>
            <person name="Abe K."/>
            <person name="Kamihara K."/>
            <person name="Katsuta N."/>
            <person name="Sato K."/>
            <person name="Tanikawa M."/>
            <person name="Yamazaki M."/>
            <person name="Ninomiya K."/>
            <person name="Ishibashi T."/>
            <person name="Yamashita H."/>
            <person name="Murakawa K."/>
            <person name="Fujimori K."/>
            <person name="Tanai H."/>
            <person name="Kimata M."/>
            <person name="Watanabe M."/>
            <person name="Hiraoka S."/>
            <person name="Chiba Y."/>
            <person name="Ishida S."/>
            <person name="Ono Y."/>
            <person name="Takiguchi S."/>
            <person name="Watanabe S."/>
            <person name="Yosida M."/>
            <person name="Hotuta T."/>
            <person name="Kusano J."/>
            <person name="Kanehori K."/>
            <person name="Takahashi-Fujii A."/>
            <person name="Hara H."/>
            <person name="Tanase T.-O."/>
            <person name="Nomura Y."/>
            <person name="Togiya S."/>
            <person name="Komai F."/>
            <person name="Hara R."/>
            <person name="Takeuchi K."/>
            <person name="Arita M."/>
            <person name="Imose N."/>
            <person name="Musashino K."/>
            <person name="Yuuki H."/>
            <person name="Oshima A."/>
            <person name="Sasaki N."/>
            <person name="Aotsuka S."/>
            <person name="Yoshikawa Y."/>
            <person name="Matsunawa H."/>
            <person name="Ichihara T."/>
            <person name="Shiohata N."/>
            <person name="Sano S."/>
            <person name="Moriya S."/>
            <person name="Momiyama H."/>
            <person name="Satoh N."/>
            <person name="Takami S."/>
            <person name="Terashima Y."/>
            <person name="Suzuki O."/>
            <person name="Nakagawa S."/>
            <person name="Senoh A."/>
            <person name="Mizoguchi H."/>
            <person name="Goto Y."/>
            <person name="Shimizu F."/>
            <person name="Wakebe H."/>
            <person name="Hishigaki H."/>
            <person name="Watanabe T."/>
            <person name="Sugiyama A."/>
            <person name="Takemoto M."/>
            <person name="Kawakami B."/>
            <person name="Yamazaki M."/>
            <person name="Watanabe K."/>
            <person name="Kumagai A."/>
            <person name="Itakura S."/>
            <person name="Fukuzumi Y."/>
            <person name="Fujimori Y."/>
            <person name="Komiyama M."/>
            <person name="Tashiro H."/>
            <person name="Tanigami A."/>
            <person name="Fujiwara T."/>
            <person name="Ono T."/>
            <person name="Yamada K."/>
            <person name="Fujii Y."/>
            <person name="Ozaki K."/>
            <person name="Hirao M."/>
            <person name="Ohmori Y."/>
            <person name="Kawabata A."/>
            <person name="Hikiji T."/>
            <person name="Kobatake N."/>
            <person name="Inagaki H."/>
            <person name="Ikema Y."/>
            <person name="Okamoto S."/>
            <person name="Okitani R."/>
            <person name="Kawakami T."/>
            <person name="Noguchi S."/>
            <person name="Itoh T."/>
            <person name="Shigeta K."/>
            <person name="Senba T."/>
            <person name="Matsumura K."/>
            <person name="Nakajima Y."/>
            <person name="Mizuno T."/>
            <person name="Morinaga M."/>
            <person name="Sasaki M."/>
            <person name="Togashi T."/>
            <person name="Oyama M."/>
            <person name="Hata H."/>
            <person name="Watanabe M."/>
            <person name="Komatsu T."/>
            <person name="Mizushima-Sugano J."/>
            <person name="Satoh T."/>
            <person name="Shirai Y."/>
            <person name="Takahashi Y."/>
            <person name="Nakagawa K."/>
            <person name="Okumura K."/>
            <person name="Nagase T."/>
            <person name="Nomura N."/>
            <person name="Kikuchi H."/>
            <person name="Masuho Y."/>
            <person name="Yamashita R."/>
            <person name="Nakai K."/>
            <person name="Yada T."/>
            <person name="Nakamura Y."/>
            <person name="Ohara O."/>
            <person name="Isogai T."/>
            <person name="Sugano S."/>
        </authorList>
    </citation>
    <scope>NUCLEOTIDE SEQUENCE [LARGE SCALE MRNA] (ISOFORM 2)</scope>
    <source>
        <tissue>Testis</tissue>
    </source>
</reference>
<reference evidence="17" key="3">
    <citation type="journal article" date="2004" name="Nature">
        <title>The DNA sequence and comparative analysis of human chromosome 10.</title>
        <authorList>
            <person name="Deloukas P."/>
            <person name="Earthrowl M.E."/>
            <person name="Grafham D.V."/>
            <person name="Rubenfield M."/>
            <person name="French L."/>
            <person name="Steward C.A."/>
            <person name="Sims S.K."/>
            <person name="Jones M.C."/>
            <person name="Searle S."/>
            <person name="Scott C."/>
            <person name="Howe K."/>
            <person name="Hunt S.E."/>
            <person name="Andrews T.D."/>
            <person name="Gilbert J.G.R."/>
            <person name="Swarbreck D."/>
            <person name="Ashurst J.L."/>
            <person name="Taylor A."/>
            <person name="Battles J."/>
            <person name="Bird C.P."/>
            <person name="Ainscough R."/>
            <person name="Almeida J.P."/>
            <person name="Ashwell R.I.S."/>
            <person name="Ambrose K.D."/>
            <person name="Babbage A.K."/>
            <person name="Bagguley C.L."/>
            <person name="Bailey J."/>
            <person name="Banerjee R."/>
            <person name="Bates K."/>
            <person name="Beasley H."/>
            <person name="Bray-Allen S."/>
            <person name="Brown A.J."/>
            <person name="Brown J.Y."/>
            <person name="Burford D.C."/>
            <person name="Burrill W."/>
            <person name="Burton J."/>
            <person name="Cahill P."/>
            <person name="Camire D."/>
            <person name="Carter N.P."/>
            <person name="Chapman J.C."/>
            <person name="Clark S.Y."/>
            <person name="Clarke G."/>
            <person name="Clee C.M."/>
            <person name="Clegg S."/>
            <person name="Corby N."/>
            <person name="Coulson A."/>
            <person name="Dhami P."/>
            <person name="Dutta I."/>
            <person name="Dunn M."/>
            <person name="Faulkner L."/>
            <person name="Frankish A."/>
            <person name="Frankland J.A."/>
            <person name="Garner P."/>
            <person name="Garnett J."/>
            <person name="Gribble S."/>
            <person name="Griffiths C."/>
            <person name="Grocock R."/>
            <person name="Gustafson E."/>
            <person name="Hammond S."/>
            <person name="Harley J.L."/>
            <person name="Hart E."/>
            <person name="Heath P.D."/>
            <person name="Ho T.P."/>
            <person name="Hopkins B."/>
            <person name="Horne J."/>
            <person name="Howden P.J."/>
            <person name="Huckle E."/>
            <person name="Hynds C."/>
            <person name="Johnson C."/>
            <person name="Johnson D."/>
            <person name="Kana A."/>
            <person name="Kay M."/>
            <person name="Kimberley A.M."/>
            <person name="Kershaw J.K."/>
            <person name="Kokkinaki M."/>
            <person name="Laird G.K."/>
            <person name="Lawlor S."/>
            <person name="Lee H.M."/>
            <person name="Leongamornlert D.A."/>
            <person name="Laird G."/>
            <person name="Lloyd C."/>
            <person name="Lloyd D.M."/>
            <person name="Loveland J."/>
            <person name="Lovell J."/>
            <person name="McLaren S."/>
            <person name="McLay K.E."/>
            <person name="McMurray A."/>
            <person name="Mashreghi-Mohammadi M."/>
            <person name="Matthews L."/>
            <person name="Milne S."/>
            <person name="Nickerson T."/>
            <person name="Nguyen M."/>
            <person name="Overton-Larty E."/>
            <person name="Palmer S.A."/>
            <person name="Pearce A.V."/>
            <person name="Peck A.I."/>
            <person name="Pelan S."/>
            <person name="Phillimore B."/>
            <person name="Porter K."/>
            <person name="Rice C.M."/>
            <person name="Rogosin A."/>
            <person name="Ross M.T."/>
            <person name="Sarafidou T."/>
            <person name="Sehra H.K."/>
            <person name="Shownkeen R."/>
            <person name="Skuce C.D."/>
            <person name="Smith M."/>
            <person name="Standring L."/>
            <person name="Sycamore N."/>
            <person name="Tester J."/>
            <person name="Thorpe A."/>
            <person name="Torcasso W."/>
            <person name="Tracey A."/>
            <person name="Tromans A."/>
            <person name="Tsolas J."/>
            <person name="Wall M."/>
            <person name="Walsh J."/>
            <person name="Wang H."/>
            <person name="Weinstock K."/>
            <person name="West A.P."/>
            <person name="Willey D.L."/>
            <person name="Whitehead S.L."/>
            <person name="Wilming L."/>
            <person name="Wray P.W."/>
            <person name="Young L."/>
            <person name="Chen Y."/>
            <person name="Lovering R.C."/>
            <person name="Moschonas N.K."/>
            <person name="Siebert R."/>
            <person name="Fechtel K."/>
            <person name="Bentley D."/>
            <person name="Durbin R.M."/>
            <person name="Hubbard T."/>
            <person name="Doucette-Stamm L."/>
            <person name="Beck S."/>
            <person name="Smith D.R."/>
            <person name="Rogers J."/>
        </authorList>
    </citation>
    <scope>NUCLEOTIDE SEQUENCE [LARGE SCALE GENOMIC DNA]</scope>
</reference>
<reference evidence="16" key="4">
    <citation type="journal article" date="2004" name="Genome Res.">
        <title>The status, quality, and expansion of the NIH full-length cDNA project: the Mammalian Gene Collection (MGC).</title>
        <authorList>
            <consortium name="The MGC Project Team"/>
        </authorList>
    </citation>
    <scope>NUCLEOTIDE SEQUENCE [LARGE SCALE MRNA] (ISOFORM 1)</scope>
    <source>
        <tissue evidence="16">Pancreatic carcinoma</tissue>
    </source>
</reference>
<reference key="5">
    <citation type="journal article" date="2013" name="PLoS Genet.">
        <title>A newly uncovered group of distantly related lysine methyltransferases preferentially interact with molecular chaperones to regulate their activity.</title>
        <authorList>
            <person name="Cloutier P."/>
            <person name="Lavallee-Adam M."/>
            <person name="Faubert D."/>
            <person name="Blanchette M."/>
            <person name="Coulombe B."/>
        </authorList>
    </citation>
    <scope>PROTEIN SEQUENCE OF 130-150</scope>
    <scope>IDENTIFICATION BY MASS SPECTROMETRY</scope>
    <scope>SUBCELLULAR LOCATION</scope>
    <scope>METHYLATION AT LYS-135</scope>
    <scope>MUTAGENESIS OF LYS-135</scope>
</reference>
<reference evidence="15" key="6">
    <citation type="journal article" date="1997" name="Arch. Dermatol. Res.">
        <title>Differential expression of the HsKin17 protein during differentiation of in vitro reconstructed human skin.</title>
        <authorList>
            <person name="Biard D.S.F."/>
            <person name="Saintigny Y."/>
            <person name="Maratrat M."/>
            <person name="Vozenin M.-C."/>
            <person name="Martin M."/>
            <person name="Daburon F."/>
            <person name="Angulo J.F."/>
        </authorList>
    </citation>
    <scope>TISSUE SPECIFICITY</scope>
</reference>
<reference evidence="15" key="7">
    <citation type="journal article" date="2002" name="Cancer Res.">
        <title>Human kin17 protein directly interacts with the simian virus 40 large T antigen and inhibits DNA replication.</title>
        <authorList>
            <person name="Miccoli L."/>
            <person name="Biard D.S.F."/>
            <person name="Creminon C."/>
            <person name="Angulo J.F."/>
        </authorList>
    </citation>
    <scope>FUNCTION</scope>
    <scope>INTERACTION WITH SV40 LARGE T ANTIGEN (MICROBIAL INFECTION)</scope>
    <scope>SUBCELLULAR LOCATION</scope>
</reference>
<reference evidence="15" key="8">
    <citation type="journal article" date="2002" name="J. Biol. Chem.">
        <title>Ionizing radiation triggers chromatin-bound kin17 complex formation in human cells.</title>
        <authorList>
            <person name="Biard D.S.F."/>
            <person name="Miccoli L."/>
            <person name="Despras E."/>
            <person name="Frobert Y."/>
            <person name="Creminon C."/>
            <person name="Angulo J.F."/>
        </authorList>
    </citation>
    <scope>FUNCTION</scope>
    <scope>SUBCELLULAR LOCATION</scope>
</reference>
<reference evidence="15" key="9">
    <citation type="journal article" date="2003" name="Mol. Cancer Res.">
        <title>Participation of kin17 protein in replication factories and in other DNA transactions mediated by high molecular weight nuclear complexes.</title>
        <authorList>
            <person name="Biard D.S.F."/>
            <person name="Miccoli L."/>
            <person name="Despras E."/>
            <person name="Harper F."/>
            <person name="Pichard E."/>
            <person name="Creminon C."/>
            <person name="Angulo J.F."/>
        </authorList>
    </citation>
    <scope>FUNCTION</scope>
    <scope>SUBCELLULAR LOCATION</scope>
</reference>
<reference evidence="15" key="10">
    <citation type="journal article" date="2003" name="Nucleic Acids Res.">
        <title>Selective interactions of human kin17 and RPA proteins with chromatin and the nuclear matrix in a DNA damage- and cell cycle-regulated manner.</title>
        <authorList>
            <person name="Miccoli L."/>
            <person name="Biard D.S.F."/>
            <person name="Frouin I."/>
            <person name="Harper F."/>
            <person name="Maga G."/>
            <person name="Angulo J.F."/>
        </authorList>
    </citation>
    <scope>FUNCTION</scope>
    <scope>SUBCELLULAR LOCATION</scope>
</reference>
<reference evidence="15" key="11">
    <citation type="journal article" date="2003" name="Proc. Natl. Acad. Sci. U.S.A.">
        <title>Global genome repair is required to activate KIN17, a UVC-responsive gene involved in DNA replication.</title>
        <authorList>
            <person name="Masson C."/>
            <person name="Menaa F."/>
            <person name="Pinon-Lataillade G."/>
            <person name="Frobert Y."/>
            <person name="Chevillard S."/>
            <person name="Radicella J.P."/>
            <person name="Sarasin A."/>
            <person name="Angulo J.F."/>
        </authorList>
    </citation>
    <scope>INDUCTION BY MITOMYCIN C</scope>
</reference>
<reference evidence="15" key="12">
    <citation type="journal article" date="2005" name="Mol. Cell. Biol.">
        <title>The human stress-activated protein kin17 belongs to the multiprotein DNA replication complex and associates in vivo with mammalian replication origins.</title>
        <authorList>
            <person name="Miccoli L."/>
            <person name="Frouin I."/>
            <person name="Novac O."/>
            <person name="Di Paola D."/>
            <person name="Harper F."/>
            <person name="Zannis-Hadjopoulos M."/>
            <person name="Maga G."/>
            <person name="Biard D.S.F."/>
            <person name="Angulo J.F."/>
        </authorList>
    </citation>
    <scope>FUNCTION</scope>
    <scope>SUBUNIT</scope>
    <scope>SUBCELLULAR LOCATION</scope>
</reference>
<reference key="13">
    <citation type="journal article" date="2011" name="BMC Syst. Biol.">
        <title>Initial characterization of the human central proteome.</title>
        <authorList>
            <person name="Burkard T.R."/>
            <person name="Planyavsky M."/>
            <person name="Kaupe I."/>
            <person name="Breitwieser F.P."/>
            <person name="Buerckstuemmer T."/>
            <person name="Bennett K.L."/>
            <person name="Superti-Furga G."/>
            <person name="Colinge J."/>
        </authorList>
    </citation>
    <scope>IDENTIFICATION BY MASS SPECTROMETRY [LARGE SCALE ANALYSIS]</scope>
</reference>
<reference key="14">
    <citation type="journal article" date="2012" name="Proc. Natl. Acad. Sci. U.S.A.">
        <title>N-terminal acetylome analyses and functional insights of the N-terminal acetyltransferase NatB.</title>
        <authorList>
            <person name="Van Damme P."/>
            <person name="Lasa M."/>
            <person name="Polevoda B."/>
            <person name="Gazquez C."/>
            <person name="Elosegui-Artola A."/>
            <person name="Kim D.S."/>
            <person name="De Juan-Pardo E."/>
            <person name="Demeyer K."/>
            <person name="Hole K."/>
            <person name="Larrea E."/>
            <person name="Timmerman E."/>
            <person name="Prieto J."/>
            <person name="Arnesen T."/>
            <person name="Sherman F."/>
            <person name="Gevaert K."/>
            <person name="Aldabe R."/>
        </authorList>
    </citation>
    <scope>IDENTIFICATION BY MASS SPECTROMETRY [LARGE SCALE ANALYSIS]</scope>
</reference>
<reference key="15">
    <citation type="journal article" date="2014" name="Mol. Cell. Proteomics">
        <title>Immunoaffinity enrichment and mass spectrometry analysis of protein methylation.</title>
        <authorList>
            <person name="Guo A."/>
            <person name="Gu H."/>
            <person name="Zhou J."/>
            <person name="Mulhern D."/>
            <person name="Wang Y."/>
            <person name="Lee K.A."/>
            <person name="Yang V."/>
            <person name="Aguiar M."/>
            <person name="Kornhauser J."/>
            <person name="Jia X."/>
            <person name="Ren J."/>
            <person name="Beausoleil S.A."/>
            <person name="Silva J.C."/>
            <person name="Vemulapalli V."/>
            <person name="Bedford M.T."/>
            <person name="Comb M.J."/>
        </authorList>
    </citation>
    <scope>METHYLATION [LARGE SCALE ANALYSIS] AT LYS-135</scope>
    <scope>IDENTIFICATION BY MASS SPECTROMETRY [LARGE SCALE ANALYSIS]</scope>
    <source>
        <tissue>Colon carcinoma</tissue>
    </source>
</reference>
<reference evidence="15" key="16">
    <citation type="journal article" date="2006" name="J. Mol. Biol.">
        <title>A tandem of SH3-like domains participates in RNA binding in KIN17, a human protein activated in response to genotoxics.</title>
        <authorList>
            <person name="le Maire A."/>
            <person name="Schiltz M."/>
            <person name="Stura E.A."/>
            <person name="Pinon-Lataillade G."/>
            <person name="Couprie J."/>
            <person name="Moutiez M."/>
            <person name="Gondry M."/>
            <person name="Angulo J.F."/>
            <person name="Zinn-Justin S."/>
        </authorList>
    </citation>
    <scope>X-RAY CRYSTALLOGRAPHY (1.45 ANGSTROMS) OF 268-393</scope>
    <scope>FUNCTION</scope>
    <scope>DOMAIN C-TERMINAL</scope>
    <scope>MUTAGENESIS OF LYS-302 AND LYS-391</scope>
</reference>
<reference key="17">
    <citation type="journal article" date="2007" name="Protein Sci.">
        <title>Solution structure of the region 51-160 of human KIN17 reveals an atypical winged helix domain.</title>
        <authorList>
            <person name="Carlier L."/>
            <person name="Couprie J."/>
            <person name="le Maire A."/>
            <person name="Guilhaudis L."/>
            <person name="Milazzo-Segalas I."/>
            <person name="Courcon M."/>
            <person name="Moutiez M."/>
            <person name="Gondry M."/>
            <person name="Davoust D."/>
            <person name="Gilquin B."/>
            <person name="Zinn-Justin S."/>
        </authorList>
    </citation>
    <scope>STRUCTURE BY NMR OF 51-160</scope>
    <scope>WINGED HELIX REGION</scope>
</reference>
<keyword id="KW-0002">3D-structure</keyword>
<keyword id="KW-0025">Alternative splicing</keyword>
<keyword id="KW-0175">Coiled coil</keyword>
<keyword id="KW-0963">Cytoplasm</keyword>
<keyword id="KW-0903">Direct protein sequencing</keyword>
<keyword id="KW-0227">DNA damage</keyword>
<keyword id="KW-0233">DNA recombination</keyword>
<keyword id="KW-0234">DNA repair</keyword>
<keyword id="KW-0235">DNA replication</keyword>
<keyword id="KW-0238">DNA-binding</keyword>
<keyword id="KW-0945">Host-virus interaction</keyword>
<keyword id="KW-0479">Metal-binding</keyword>
<keyword id="KW-0488">Methylation</keyword>
<keyword id="KW-0507">mRNA processing</keyword>
<keyword id="KW-0539">Nucleus</keyword>
<keyword id="KW-1267">Proteomics identification</keyword>
<keyword id="KW-1185">Reference proteome</keyword>
<keyword id="KW-0694">RNA-binding</keyword>
<keyword id="KW-0346">Stress response</keyword>
<keyword id="KW-0862">Zinc</keyword>
<keyword id="KW-0863">Zinc-finger</keyword>
<dbReference type="EMBL" id="AJ005273">
    <property type="protein sequence ID" value="CAA06462.1"/>
    <property type="molecule type" value="mRNA"/>
</dbReference>
<dbReference type="EMBL" id="AK301789">
    <property type="protein sequence ID" value="BAG63244.1"/>
    <property type="molecule type" value="mRNA"/>
</dbReference>
<dbReference type="EMBL" id="AL158044">
    <property type="status" value="NOT_ANNOTATED_CDS"/>
    <property type="molecule type" value="Genomic_DNA"/>
</dbReference>
<dbReference type="EMBL" id="BC017309">
    <property type="protein sequence ID" value="AAH17309.1"/>
    <property type="molecule type" value="mRNA"/>
</dbReference>
<dbReference type="CCDS" id="CCDS7080.1">
    <molecule id="O60870-1"/>
</dbReference>
<dbReference type="RefSeq" id="NP_036443.1">
    <molecule id="O60870-1"/>
    <property type="nucleotide sequence ID" value="NM_012311.4"/>
</dbReference>
<dbReference type="RefSeq" id="XP_011517729.1">
    <property type="nucleotide sequence ID" value="XM_011519427.1"/>
</dbReference>
<dbReference type="PDB" id="2CKK">
    <property type="method" value="X-ray"/>
    <property type="resolution" value="1.45 A"/>
    <property type="chains" value="A=268-393"/>
</dbReference>
<dbReference type="PDB" id="2V1N">
    <property type="method" value="NMR"/>
    <property type="chains" value="A=51-160"/>
</dbReference>
<dbReference type="PDB" id="7ABH">
    <property type="method" value="EM"/>
    <property type="resolution" value="4.50 A"/>
    <property type="chains" value="7=1-393"/>
</dbReference>
<dbReference type="PDB" id="7ABI">
    <property type="method" value="EM"/>
    <property type="resolution" value="8.00 A"/>
    <property type="chains" value="7=1-393"/>
</dbReference>
<dbReference type="PDB" id="8I0P">
    <property type="method" value="EM"/>
    <property type="resolution" value="3.40 A"/>
    <property type="chains" value="K=1-393"/>
</dbReference>
<dbReference type="PDB" id="9COJ">
    <property type="method" value="NMR"/>
    <property type="chains" value="A=268-393"/>
</dbReference>
<dbReference type="PDBsum" id="2CKK"/>
<dbReference type="PDBsum" id="2V1N"/>
<dbReference type="PDBsum" id="7ABH"/>
<dbReference type="PDBsum" id="7ABI"/>
<dbReference type="PDBsum" id="8I0P"/>
<dbReference type="PDBsum" id="9COJ"/>
<dbReference type="BMRB" id="O60870"/>
<dbReference type="EMDB" id="EMD-11696"/>
<dbReference type="EMDB" id="EMD-11697"/>
<dbReference type="EMDB" id="EMD-35105"/>
<dbReference type="SMR" id="O60870"/>
<dbReference type="BioGRID" id="116600">
    <property type="interactions" value="74"/>
</dbReference>
<dbReference type="CORUM" id="O60870"/>
<dbReference type="FunCoup" id="O60870">
    <property type="interactions" value="3874"/>
</dbReference>
<dbReference type="IntAct" id="O60870">
    <property type="interactions" value="16"/>
</dbReference>
<dbReference type="MINT" id="O60870"/>
<dbReference type="STRING" id="9606.ENSP00000368881"/>
<dbReference type="iPTMnet" id="O60870"/>
<dbReference type="MetOSite" id="O60870"/>
<dbReference type="PhosphoSitePlus" id="O60870"/>
<dbReference type="BioMuta" id="KIN"/>
<dbReference type="jPOST" id="O60870"/>
<dbReference type="MassIVE" id="O60870"/>
<dbReference type="PaxDb" id="9606-ENSP00000368881"/>
<dbReference type="PeptideAtlas" id="O60870"/>
<dbReference type="ProteomicsDB" id="49638">
    <molecule id="O60870-1"/>
</dbReference>
<dbReference type="ProteomicsDB" id="5403"/>
<dbReference type="Pumba" id="O60870"/>
<dbReference type="Antibodypedia" id="4279">
    <property type="antibodies" value="114 antibodies from 28 providers"/>
</dbReference>
<dbReference type="DNASU" id="22944"/>
<dbReference type="Ensembl" id="ENST00000379562.9">
    <molecule id="O60870-1"/>
    <property type="protein sequence ID" value="ENSP00000368881.3"/>
    <property type="gene ID" value="ENSG00000151657.12"/>
</dbReference>
<dbReference type="GeneID" id="22944"/>
<dbReference type="KEGG" id="hsa:22944"/>
<dbReference type="MANE-Select" id="ENST00000379562.9">
    <property type="protein sequence ID" value="ENSP00000368881.3"/>
    <property type="RefSeq nucleotide sequence ID" value="NM_012311.4"/>
    <property type="RefSeq protein sequence ID" value="NP_036443.1"/>
</dbReference>
<dbReference type="UCSC" id="uc001ijt.4">
    <molecule id="O60870-1"/>
    <property type="organism name" value="human"/>
</dbReference>
<dbReference type="AGR" id="HGNC:6327"/>
<dbReference type="CTD" id="22944"/>
<dbReference type="DisGeNET" id="22944"/>
<dbReference type="GeneCards" id="KIN"/>
<dbReference type="HGNC" id="HGNC:6327">
    <property type="gene designation" value="KIN"/>
</dbReference>
<dbReference type="HPA" id="ENSG00000151657">
    <property type="expression patterns" value="Low tissue specificity"/>
</dbReference>
<dbReference type="MIM" id="601720">
    <property type="type" value="gene"/>
</dbReference>
<dbReference type="neXtProt" id="NX_O60870"/>
<dbReference type="OpenTargets" id="ENSG00000151657"/>
<dbReference type="PharmGKB" id="PA30113"/>
<dbReference type="VEuPathDB" id="HostDB:ENSG00000151657"/>
<dbReference type="eggNOG" id="KOG2837">
    <property type="taxonomic scope" value="Eukaryota"/>
</dbReference>
<dbReference type="GeneTree" id="ENSGT00390000005903"/>
<dbReference type="HOGENOM" id="CLU_030065_1_0_1"/>
<dbReference type="InParanoid" id="O60870"/>
<dbReference type="OMA" id="RMTDFIE"/>
<dbReference type="OrthoDB" id="10266249at2759"/>
<dbReference type="PAN-GO" id="O60870">
    <property type="GO annotations" value="4 GO annotations based on evolutionary models"/>
</dbReference>
<dbReference type="PhylomeDB" id="O60870"/>
<dbReference type="TreeFam" id="TF314393"/>
<dbReference type="PathwayCommons" id="O60870"/>
<dbReference type="Reactome" id="R-HSA-8876725">
    <property type="pathway name" value="Protein methylation"/>
</dbReference>
<dbReference type="SignaLink" id="O60870"/>
<dbReference type="BioGRID-ORCS" id="22944">
    <property type="hits" value="783 hits in 1158 CRISPR screens"/>
</dbReference>
<dbReference type="CD-CODE" id="91857CE7">
    <property type="entry name" value="Nucleolus"/>
</dbReference>
<dbReference type="ChiTaRS" id="KIN">
    <property type="organism name" value="human"/>
</dbReference>
<dbReference type="EvolutionaryTrace" id="O60870"/>
<dbReference type="GeneWiki" id="KIN_(gene)"/>
<dbReference type="GenomeRNAi" id="22944"/>
<dbReference type="Pharos" id="O60870">
    <property type="development level" value="Tbio"/>
</dbReference>
<dbReference type="PRO" id="PR:O60870"/>
<dbReference type="Proteomes" id="UP000005640">
    <property type="component" value="Chromosome 10"/>
</dbReference>
<dbReference type="RNAct" id="O60870">
    <property type="molecule type" value="protein"/>
</dbReference>
<dbReference type="Bgee" id="ENSG00000151657">
    <property type="expression patterns" value="Expressed in monocyte and 190 other cell types or tissues"/>
</dbReference>
<dbReference type="ExpressionAtlas" id="O60870">
    <property type="expression patterns" value="baseline and differential"/>
</dbReference>
<dbReference type="GO" id="GO:0005829">
    <property type="term" value="C:cytosol"/>
    <property type="evidence" value="ECO:0000314"/>
    <property type="project" value="HPA"/>
</dbReference>
<dbReference type="GO" id="GO:0016363">
    <property type="term" value="C:nuclear matrix"/>
    <property type="evidence" value="ECO:0000314"/>
    <property type="project" value="UniProtKB"/>
</dbReference>
<dbReference type="GO" id="GO:0005654">
    <property type="term" value="C:nucleoplasm"/>
    <property type="evidence" value="ECO:0000314"/>
    <property type="project" value="HPA"/>
</dbReference>
<dbReference type="GO" id="GO:0005634">
    <property type="term" value="C:nucleus"/>
    <property type="evidence" value="ECO:0000318"/>
    <property type="project" value="GO_Central"/>
</dbReference>
<dbReference type="GO" id="GO:0032991">
    <property type="term" value="C:protein-containing complex"/>
    <property type="evidence" value="ECO:0000314"/>
    <property type="project" value="UniProtKB"/>
</dbReference>
<dbReference type="GO" id="GO:0003677">
    <property type="term" value="F:DNA binding"/>
    <property type="evidence" value="ECO:0000304"/>
    <property type="project" value="ProtInc"/>
</dbReference>
<dbReference type="GO" id="GO:0003690">
    <property type="term" value="F:double-stranded DNA binding"/>
    <property type="evidence" value="ECO:0000250"/>
    <property type="project" value="UniProtKB"/>
</dbReference>
<dbReference type="GO" id="GO:0003723">
    <property type="term" value="F:RNA binding"/>
    <property type="evidence" value="ECO:0000314"/>
    <property type="project" value="UniProtKB"/>
</dbReference>
<dbReference type="GO" id="GO:0008270">
    <property type="term" value="F:zinc ion binding"/>
    <property type="evidence" value="ECO:0007669"/>
    <property type="project" value="UniProtKB-KW"/>
</dbReference>
<dbReference type="GO" id="GO:0006974">
    <property type="term" value="P:DNA damage response"/>
    <property type="evidence" value="ECO:0000270"/>
    <property type="project" value="UniProtKB"/>
</dbReference>
<dbReference type="GO" id="GO:0006310">
    <property type="term" value="P:DNA recombination"/>
    <property type="evidence" value="ECO:0007669"/>
    <property type="project" value="UniProtKB-KW"/>
</dbReference>
<dbReference type="GO" id="GO:0006281">
    <property type="term" value="P:DNA repair"/>
    <property type="evidence" value="ECO:0007669"/>
    <property type="project" value="UniProtKB-KW"/>
</dbReference>
<dbReference type="GO" id="GO:0006260">
    <property type="term" value="P:DNA replication"/>
    <property type="evidence" value="ECO:0000314"/>
    <property type="project" value="UniProtKB"/>
</dbReference>
<dbReference type="GO" id="GO:0006397">
    <property type="term" value="P:mRNA processing"/>
    <property type="evidence" value="ECO:0000304"/>
    <property type="project" value="UniProtKB"/>
</dbReference>
<dbReference type="CDD" id="cd13155">
    <property type="entry name" value="KOW_KIN17"/>
    <property type="match status" value="1"/>
</dbReference>
<dbReference type="FunFam" id="2.30.30.140:FF:000031">
    <property type="entry name" value="DNA/RNA-binding protein KIN17 isoform X1"/>
    <property type="match status" value="1"/>
</dbReference>
<dbReference type="FunFam" id="1.10.10.2030:FF:000001">
    <property type="entry name" value="DNA/RNA-binding protein KIN17, putative"/>
    <property type="match status" value="1"/>
</dbReference>
<dbReference type="FunFam" id="2.30.30.30:FF:000021">
    <property type="entry name" value="DNA/RNA-binding protein KIN17, putative"/>
    <property type="match status" value="1"/>
</dbReference>
<dbReference type="Gene3D" id="2.30.30.140">
    <property type="match status" value="1"/>
</dbReference>
<dbReference type="Gene3D" id="2.30.30.30">
    <property type="match status" value="1"/>
</dbReference>
<dbReference type="Gene3D" id="1.10.10.2030">
    <property type="entry name" value="DNA/RNA-binding protein Kin17, conserved domain"/>
    <property type="match status" value="1"/>
</dbReference>
<dbReference type="InterPro" id="IPR056767">
    <property type="entry name" value="C2H2-Znf_KIN17"/>
</dbReference>
<dbReference type="InterPro" id="IPR019447">
    <property type="entry name" value="DNA/RNA-bd_Kin17_WH-like_dom"/>
</dbReference>
<dbReference type="InterPro" id="IPR037321">
    <property type="entry name" value="KIN17-like"/>
</dbReference>
<dbReference type="InterPro" id="IPR038254">
    <property type="entry name" value="KIN17_WH-like_sf"/>
</dbReference>
<dbReference type="InterPro" id="IPR041330">
    <property type="entry name" value="KN17_SH3"/>
</dbReference>
<dbReference type="InterPro" id="IPR041995">
    <property type="entry name" value="KOW_KIN17"/>
</dbReference>
<dbReference type="InterPro" id="IPR014722">
    <property type="entry name" value="Rib_uL2_dom2"/>
</dbReference>
<dbReference type="InterPro" id="IPR036236">
    <property type="entry name" value="Znf_C2H2_sf"/>
</dbReference>
<dbReference type="PANTHER" id="PTHR12805:SF0">
    <property type="entry name" value="DNA_RNA-BINDING PROTEIN KIN17"/>
    <property type="match status" value="1"/>
</dbReference>
<dbReference type="PANTHER" id="PTHR12805">
    <property type="entry name" value="KIN17 KIN, ANTIGENIC DETERMINANT OF RECA PROTEIN HOMOLOG"/>
    <property type="match status" value="1"/>
</dbReference>
<dbReference type="Pfam" id="PF25095">
    <property type="entry name" value="C2H2-zf_KIN17"/>
    <property type="match status" value="1"/>
</dbReference>
<dbReference type="Pfam" id="PF18131">
    <property type="entry name" value="KN17_SH3"/>
    <property type="match status" value="1"/>
</dbReference>
<dbReference type="Pfam" id="PF25092">
    <property type="entry name" value="SH3_KIN17_C"/>
    <property type="match status" value="1"/>
</dbReference>
<dbReference type="Pfam" id="PF10357">
    <property type="entry name" value="WH_KIN17"/>
    <property type="match status" value="1"/>
</dbReference>
<dbReference type="SMART" id="SM01253">
    <property type="entry name" value="Kin17_mid"/>
    <property type="match status" value="1"/>
</dbReference>
<dbReference type="SUPFAM" id="SSF57667">
    <property type="entry name" value="beta-beta-alpha zinc fingers"/>
    <property type="match status" value="1"/>
</dbReference>
<dbReference type="PROSITE" id="PS00028">
    <property type="entry name" value="ZINC_FINGER_C2H2_1"/>
    <property type="match status" value="1"/>
</dbReference>
<evidence type="ECO:0000250" key="1">
    <source>
        <dbReference type="UniProtKB" id="Q8K339"/>
    </source>
</evidence>
<evidence type="ECO:0000255" key="2"/>
<evidence type="ECO:0000256" key="3">
    <source>
        <dbReference type="SAM" id="MobiDB-lite"/>
    </source>
</evidence>
<evidence type="ECO:0000269" key="4">
    <source>
    </source>
</evidence>
<evidence type="ECO:0000269" key="5">
    <source>
    </source>
</evidence>
<evidence type="ECO:0000269" key="6">
    <source>
    </source>
</evidence>
<evidence type="ECO:0000269" key="7">
    <source>
    </source>
</evidence>
<evidence type="ECO:0000269" key="8">
    <source>
    </source>
</evidence>
<evidence type="ECO:0000269" key="9">
    <source>
    </source>
</evidence>
<evidence type="ECO:0000269" key="10">
    <source>
    </source>
</evidence>
<evidence type="ECO:0000269" key="11">
    <source>
    </source>
</evidence>
<evidence type="ECO:0000269" key="12">
    <source>
    </source>
</evidence>
<evidence type="ECO:0000269" key="13">
    <source>
    </source>
</evidence>
<evidence type="ECO:0000303" key="14">
    <source>
    </source>
</evidence>
<evidence type="ECO:0000305" key="15"/>
<evidence type="ECO:0000312" key="16">
    <source>
        <dbReference type="EMBL" id="AAH17309.1"/>
    </source>
</evidence>
<evidence type="ECO:0000312" key="17">
    <source>
        <dbReference type="EMBL" id="AL158044"/>
    </source>
</evidence>
<evidence type="ECO:0000312" key="18">
    <source>
        <dbReference type="EMBL" id="CAA06462.1"/>
    </source>
</evidence>
<evidence type="ECO:0000312" key="19">
    <source>
        <dbReference type="HGNC" id="HGNC:6327"/>
    </source>
</evidence>
<evidence type="ECO:0007744" key="20">
    <source>
    </source>
</evidence>
<evidence type="ECO:0007829" key="21">
    <source>
        <dbReference type="PDB" id="2CKK"/>
    </source>
</evidence>
<evidence type="ECO:0007829" key="22">
    <source>
        <dbReference type="PDB" id="2V1N"/>
    </source>
</evidence>
<organism>
    <name type="scientific">Homo sapiens</name>
    <name type="common">Human</name>
    <dbReference type="NCBI Taxonomy" id="9606"/>
    <lineage>
        <taxon>Eukaryota</taxon>
        <taxon>Metazoa</taxon>
        <taxon>Chordata</taxon>
        <taxon>Craniata</taxon>
        <taxon>Vertebrata</taxon>
        <taxon>Euteleostomi</taxon>
        <taxon>Mammalia</taxon>
        <taxon>Eutheria</taxon>
        <taxon>Euarchontoglires</taxon>
        <taxon>Primates</taxon>
        <taxon>Haplorrhini</taxon>
        <taxon>Catarrhini</taxon>
        <taxon>Hominidae</taxon>
        <taxon>Homo</taxon>
    </lineage>
</organism>
<comment type="function">
    <text evidence="1 5 6 8 9 10 11">Involved in DNA replication and the cellular response to DNA damage. May participate in DNA replication factories and create a bridge between DNA replication and repair mediated by high molecular weight complexes. May play a role in illegitimate recombination and regulation of gene expression. May participate in mRNA processing. Binds, in vitro, to double-stranded DNA. Also shown to bind preferentially to curved DNA in vitro and in vivo (By similarity). Binds via its C-terminal domain to RNA in vitro.</text>
</comment>
<comment type="subunit">
    <text evidence="10">Associated with DNA polymerase alpha, RFC1 and cyclin A, in multiprotein DNA replication complexes. Also associates with replication origins at the G1/S phase boundary and throughout the S phase in vivo.</text>
</comment>
<comment type="subunit">
    <text evidence="6">(Microbial infection) Interacts with SV40 large T antigen.</text>
</comment>
<comment type="interaction">
    <interactant intactId="EBI-2561225">
        <id>O60870</id>
    </interactant>
    <interactant intactId="EBI-2872640">
        <id>Q9BUU2</id>
        <label>METTL22</label>
    </interactant>
    <organismsDiffer>false</organismsDiffer>
    <experiments>2</experiments>
</comment>
<comment type="subcellular location">
    <subcellularLocation>
        <location evidence="5 6 8 9 10">Nucleus</location>
    </subcellularLocation>
    <subcellularLocation>
        <location evidence="5 6 8 9 10">Cytoplasm</location>
    </subcellularLocation>
    <text evidence="1 5 6 8 9 10">During S phase, strongly associated with the nuclear matrix, and to chromosomal DNA in the presence of DNA damage. Also shows cytoplasmic localization in elongated spermatids.</text>
</comment>
<comment type="alternative products">
    <event type="alternative splicing"/>
    <isoform>
        <id>O60870-1</id>
        <name>1</name>
        <sequence type="displayed"/>
    </isoform>
    <isoform>
        <id>O60870-2</id>
        <name>2</name>
        <sequence type="described" ref="VSP_056074"/>
    </isoform>
</comment>
<comment type="tissue specificity">
    <text evidence="4 13">Ubiquitously expressed in all tissues examined, with highest levels in skeletal muscle, heart and testis. Differentially expressed in non-tumorigenic and tumorigenic cell lines. Highly expressed in proliferating epithelial keratinocyte cells in vitro (at protein level).</text>
</comment>
<comment type="induction">
    <text evidence="4 7">By UVC irradiation in quiescent primary fibroblasts. By mitomycin C in human melanoma MeWO cells.</text>
</comment>
<comment type="domain">
    <text evidence="11">The C-terminal domain (268-393) is organized into 2 subdomains that bear structural similarities to SH3-like domains. Both subdomains adopt a similar 5-stranded beta-barrel-like fold and are connected to each other by a short linker of 5 residues. The 5 beta-sheets are packed at approximately right angles against each other. A highly conserved groove formed at the interface between the 2 subdomains, comprised of Lys residues 302 and 391 and other positively charged residues, may possibly be the site of RNA-binding.</text>
</comment>
<comment type="miscellaneous">
    <text evidence="1">Recognized by antibodies directed against the RecA protein.</text>
</comment>
<comment type="similarity">
    <text evidence="15">Belongs to the KIN17 family.</text>
</comment>
<protein>
    <recommendedName>
        <fullName>DNA/RNA-binding protein KIN17</fullName>
    </recommendedName>
    <alternativeName>
        <fullName>Binding to curved DNA</fullName>
    </alternativeName>
    <alternativeName>
        <fullName>KIN, antigenic determinant of recA protein homolog</fullName>
    </alternativeName>
</protein>
<feature type="chain" id="PRO_0000289134" description="DNA/RNA-binding protein KIN17">
    <location>
        <begin position="1"/>
        <end position="393"/>
    </location>
</feature>
<feature type="zinc finger region" description="C2H2-type" evidence="2">
    <location>
        <begin position="28"/>
        <end position="50"/>
    </location>
</feature>
<feature type="region of interest" description="Winged helix-turn-helix (wHTH)">
    <location>
        <begin position="51"/>
        <end position="160"/>
    </location>
</feature>
<feature type="region of interest" description="Disordered" evidence="3">
    <location>
        <begin position="209"/>
        <end position="260"/>
    </location>
</feature>
<feature type="region of interest" description="C-terminal subdomain A" evidence="11">
    <location>
        <begin position="284"/>
        <end position="334"/>
    </location>
</feature>
<feature type="region of interest" description="C-terminal subdomain B" evidence="11">
    <location>
        <begin position="340"/>
        <end position="391"/>
    </location>
</feature>
<feature type="coiled-coil region" evidence="2">
    <location>
        <begin position="147"/>
        <end position="180"/>
    </location>
</feature>
<feature type="coiled-coil region" evidence="2">
    <location>
        <begin position="250"/>
        <end position="277"/>
    </location>
</feature>
<feature type="compositionally biased region" description="Low complexity" evidence="3">
    <location>
        <begin position="209"/>
        <end position="224"/>
    </location>
</feature>
<feature type="modified residue" description="N6,N6,N6-trimethyllysine; by METTL22; in vitro" evidence="12 20">
    <location>
        <position position="135"/>
    </location>
</feature>
<feature type="modified residue" description="N6-methyllysine" evidence="20">
    <location>
        <position position="135"/>
    </location>
</feature>
<feature type="splice variant" id="VSP_056074" description="In isoform 2." evidence="14">
    <original>GPLKGRRVEGIQYEDISKLA</original>
    <variation>V</variation>
    <location>
        <begin position="374"/>
        <end position="393"/>
    </location>
</feature>
<feature type="mutagenesis site" description="Almost complete loss of in vitro methylation by METTL22." evidence="12">
    <original>K</original>
    <variation>R</variation>
    <location>
        <position position="135"/>
    </location>
</feature>
<feature type="mutagenesis site" description="Significant reduction of RNA-binding activity." evidence="11">
    <original>K</original>
    <variation>E</variation>
    <location>
        <position position="302"/>
    </location>
</feature>
<feature type="mutagenesis site" description="Significant reduction of RNA-binding activity." evidence="11">
    <original>K</original>
    <variation>E</variation>
    <location>
        <position position="391"/>
    </location>
</feature>
<feature type="helix" evidence="22">
    <location>
        <begin position="61"/>
        <end position="63"/>
    </location>
</feature>
<feature type="helix" evidence="22">
    <location>
        <begin position="65"/>
        <end position="83"/>
    </location>
</feature>
<feature type="strand" evidence="22">
    <location>
        <begin position="88"/>
        <end position="90"/>
    </location>
</feature>
<feature type="helix" evidence="22">
    <location>
        <begin position="91"/>
        <end position="98"/>
    </location>
</feature>
<feature type="helix" evidence="22">
    <location>
        <begin position="107"/>
        <end position="109"/>
    </location>
</feature>
<feature type="helix" evidence="22">
    <location>
        <begin position="115"/>
        <end position="122"/>
    </location>
</feature>
<feature type="turn" evidence="22">
    <location>
        <begin position="123"/>
        <end position="126"/>
    </location>
</feature>
<feature type="strand" evidence="22">
    <location>
        <begin position="127"/>
        <end position="133"/>
    </location>
</feature>
<feature type="strand" evidence="22">
    <location>
        <begin position="136"/>
        <end position="141"/>
    </location>
</feature>
<feature type="helix" evidence="22">
    <location>
        <begin position="146"/>
        <end position="154"/>
    </location>
</feature>
<feature type="helix" evidence="22">
    <location>
        <begin position="156"/>
        <end position="158"/>
    </location>
</feature>
<feature type="strand" evidence="21">
    <location>
        <begin position="285"/>
        <end position="289"/>
    </location>
</feature>
<feature type="helix" evidence="21">
    <location>
        <begin position="296"/>
        <end position="298"/>
    </location>
</feature>
<feature type="strand" evidence="21">
    <location>
        <begin position="302"/>
        <end position="309"/>
    </location>
</feature>
<feature type="turn" evidence="21">
    <location>
        <begin position="310"/>
        <end position="312"/>
    </location>
</feature>
<feature type="strand" evidence="21">
    <location>
        <begin position="313"/>
        <end position="318"/>
    </location>
</feature>
<feature type="turn" evidence="21">
    <location>
        <begin position="319"/>
        <end position="321"/>
    </location>
</feature>
<feature type="strand" evidence="21">
    <location>
        <begin position="324"/>
        <end position="328"/>
    </location>
</feature>
<feature type="helix" evidence="21">
    <location>
        <begin position="329"/>
        <end position="331"/>
    </location>
</feature>
<feature type="strand" evidence="21">
    <location>
        <begin position="332"/>
        <end position="334"/>
    </location>
</feature>
<feature type="strand" evidence="21">
    <location>
        <begin position="342"/>
        <end position="345"/>
    </location>
</feature>
<feature type="turn" evidence="21">
    <location>
        <begin position="349"/>
        <end position="352"/>
    </location>
</feature>
<feature type="strand" evidence="21">
    <location>
        <begin position="354"/>
        <end position="361"/>
    </location>
</feature>
<feature type="helix" evidence="21">
    <location>
        <begin position="362"/>
        <end position="364"/>
    </location>
</feature>
<feature type="strand" evidence="21">
    <location>
        <begin position="366"/>
        <end position="371"/>
    </location>
</feature>
<feature type="turn" evidence="21">
    <location>
        <begin position="375"/>
        <end position="378"/>
    </location>
</feature>
<feature type="strand" evidence="21">
    <location>
        <begin position="380"/>
        <end position="385"/>
    </location>
</feature>
<feature type="helix" evidence="21">
    <location>
        <begin position="386"/>
        <end position="388"/>
    </location>
</feature>
<feature type="strand" evidence="21">
    <location>
        <begin position="389"/>
        <end position="392"/>
    </location>
</feature>
<gene>
    <name evidence="19" type="primary">KIN</name>
    <name type="synonym">BTCD</name>
    <name type="synonym">KIN17</name>
</gene>